<protein>
    <recommendedName>
        <fullName>Uncharacterized protein HI_0220.2</fullName>
    </recommendedName>
</protein>
<reference key="1">
    <citation type="journal article" date="1995" name="Science">
        <title>Whole-genome random sequencing and assembly of Haemophilus influenzae Rd.</title>
        <authorList>
            <person name="Fleischmann R.D."/>
            <person name="Adams M.D."/>
            <person name="White O."/>
            <person name="Clayton R.A."/>
            <person name="Kirkness E.F."/>
            <person name="Kerlavage A.R."/>
            <person name="Bult C.J."/>
            <person name="Tomb J.-F."/>
            <person name="Dougherty B.A."/>
            <person name="Merrick J.M."/>
            <person name="McKenney K."/>
            <person name="Sutton G.G."/>
            <person name="FitzHugh W."/>
            <person name="Fields C.A."/>
            <person name="Gocayne J.D."/>
            <person name="Scott J.D."/>
            <person name="Shirley R."/>
            <person name="Liu L.-I."/>
            <person name="Glodek A."/>
            <person name="Kelley J.M."/>
            <person name="Weidman J.F."/>
            <person name="Phillips C.A."/>
            <person name="Spriggs T."/>
            <person name="Hedblom E."/>
            <person name="Cotton M.D."/>
            <person name="Utterback T.R."/>
            <person name="Hanna M.C."/>
            <person name="Nguyen D.T."/>
            <person name="Saudek D.M."/>
            <person name="Brandon R.C."/>
            <person name="Fine L.D."/>
            <person name="Fritchman J.L."/>
            <person name="Fuhrmann J.L."/>
            <person name="Geoghagen N.S.M."/>
            <person name="Gnehm C.L."/>
            <person name="McDonald L.A."/>
            <person name="Small K.V."/>
            <person name="Fraser C.M."/>
            <person name="Smith H.O."/>
            <person name="Venter J.C."/>
        </authorList>
    </citation>
    <scope>NUCLEOTIDE SEQUENCE [LARGE SCALE GENOMIC DNA]</scope>
    <source>
        <strain>ATCC 51907 / DSM 11121 / KW20 / Rd</strain>
    </source>
</reference>
<reference key="2">
    <citation type="submission" date="1998-05" db="EMBL/GenBank/DDBJ databases">
        <authorList>
            <person name="White O."/>
            <person name="Clayton R.A."/>
            <person name="Kerlavage A.R."/>
            <person name="Fleischmann R.D."/>
            <person name="Peterson J."/>
            <person name="Hickey E."/>
            <person name="Dodson R."/>
            <person name="Gwinn M."/>
        </authorList>
    </citation>
    <scope>IDENTIFICATION</scope>
</reference>
<keyword id="KW-1185">Reference proteome</keyword>
<proteinExistence type="inferred from homology"/>
<gene>
    <name type="ordered locus">HI_0220.2</name>
</gene>
<sequence>MIFHIFQIDFIYSFLISFIMLKNLDEITSSIIADPQNKDFTERGIFPLFSAPKTARINIVGQAPGLKAEQSRLYWNDKSGDRLREWLGVDYDYFYNSGIFAVLPMDFYYPGYGKSGDLPPRQGFAERWHPMILGNLPNIQLTILIGQYAQKYYLPENKDNVTNTVKNYRQFLPHFMPLVHPSPRNQLWVTKNPWFEEQVIPELQILVKQIINKD</sequence>
<dbReference type="EMBL" id="L42023">
    <property type="protein sequence ID" value="AAC21888.1"/>
    <property type="molecule type" value="Genomic_DNA"/>
</dbReference>
<dbReference type="RefSeq" id="NP_438390.2">
    <property type="nucleotide sequence ID" value="NC_000907.1"/>
</dbReference>
<dbReference type="SMR" id="O86222"/>
<dbReference type="STRING" id="71421.HI_0220.2"/>
<dbReference type="EnsemblBacteria" id="AAC21888">
    <property type="protein sequence ID" value="AAC21888"/>
    <property type="gene ID" value="HI_0220.2"/>
</dbReference>
<dbReference type="KEGG" id="hin:HI_0220.2"/>
<dbReference type="PATRIC" id="fig|71421.8.peg.231"/>
<dbReference type="eggNOG" id="COG1573">
    <property type="taxonomic scope" value="Bacteria"/>
</dbReference>
<dbReference type="HOGENOM" id="CLU_075800_0_0_6"/>
<dbReference type="OrthoDB" id="9789139at2"/>
<dbReference type="PhylomeDB" id="O86222"/>
<dbReference type="Proteomes" id="UP000000579">
    <property type="component" value="Chromosome"/>
</dbReference>
<dbReference type="CDD" id="cd10033">
    <property type="entry name" value="UDG_like"/>
    <property type="match status" value="1"/>
</dbReference>
<dbReference type="Gene3D" id="3.40.470.10">
    <property type="entry name" value="Uracil-DNA glycosylase-like domain"/>
    <property type="match status" value="1"/>
</dbReference>
<dbReference type="InterPro" id="IPR047124">
    <property type="entry name" value="HI_0220.2"/>
</dbReference>
<dbReference type="InterPro" id="IPR005122">
    <property type="entry name" value="Uracil-DNA_glycosylase-like"/>
</dbReference>
<dbReference type="InterPro" id="IPR036895">
    <property type="entry name" value="Uracil-DNA_glycosylase-like_sf"/>
</dbReference>
<dbReference type="PANTHER" id="PTHR42160">
    <property type="entry name" value="URACIL-DNA GLYCOSYLASE SUPERFAMILY PROTEIN"/>
    <property type="match status" value="1"/>
</dbReference>
<dbReference type="PANTHER" id="PTHR42160:SF1">
    <property type="entry name" value="URACIL-DNA GLYCOSYLASE SUPERFAMILY PROTEIN"/>
    <property type="match status" value="1"/>
</dbReference>
<dbReference type="Pfam" id="PF03167">
    <property type="entry name" value="UDG"/>
    <property type="match status" value="1"/>
</dbReference>
<dbReference type="SMART" id="SM00986">
    <property type="entry name" value="UDG"/>
    <property type="match status" value="1"/>
</dbReference>
<dbReference type="SMART" id="SM00987">
    <property type="entry name" value="UreE_C"/>
    <property type="match status" value="1"/>
</dbReference>
<dbReference type="SUPFAM" id="SSF52141">
    <property type="entry name" value="Uracil-DNA glycosylase-like"/>
    <property type="match status" value="1"/>
</dbReference>
<organism>
    <name type="scientific">Haemophilus influenzae (strain ATCC 51907 / DSM 11121 / KW20 / Rd)</name>
    <dbReference type="NCBI Taxonomy" id="71421"/>
    <lineage>
        <taxon>Bacteria</taxon>
        <taxon>Pseudomonadati</taxon>
        <taxon>Pseudomonadota</taxon>
        <taxon>Gammaproteobacteria</taxon>
        <taxon>Pasteurellales</taxon>
        <taxon>Pasteurellaceae</taxon>
        <taxon>Haemophilus</taxon>
    </lineage>
</organism>
<feature type="chain" id="PRO_0000077898" description="Uncharacterized protein HI_0220.2">
    <location>
        <begin position="1"/>
        <end position="214"/>
    </location>
</feature>
<name>Y220B_HAEIN</name>
<comment type="similarity">
    <text>Belongs to the uracil-DNA glycosylase (UDG) superfamily.</text>
</comment>
<accession>O86222</accession>